<feature type="chain" id="PRO_0000332249" description="Golgin subfamily A member 6C">
    <location>
        <begin position="1"/>
        <end position="693"/>
    </location>
</feature>
<feature type="region of interest" description="Disordered" evidence="2">
    <location>
        <begin position="20"/>
        <end position="71"/>
    </location>
</feature>
<feature type="region of interest" description="Disordered" evidence="2">
    <location>
        <begin position="497"/>
        <end position="547"/>
    </location>
</feature>
<feature type="region of interest" description="Disordered" evidence="2">
    <location>
        <begin position="629"/>
        <end position="693"/>
    </location>
</feature>
<feature type="coiled-coil region" evidence="1">
    <location>
        <begin position="73"/>
        <end position="611"/>
    </location>
</feature>
<feature type="compositionally biased region" description="Basic and acidic residues" evidence="2">
    <location>
        <begin position="537"/>
        <end position="547"/>
    </location>
</feature>
<feature type="compositionally biased region" description="Polar residues" evidence="2">
    <location>
        <begin position="679"/>
        <end position="693"/>
    </location>
</feature>
<comment type="similarity">
    <text evidence="3">Belongs to the GOLGA6 family.</text>
</comment>
<comment type="caution">
    <text evidence="3">Maps to a duplicated region on chromosome 15; the gene is present in at least 4 almost identical copies.</text>
</comment>
<dbReference type="EMBL" id="AC068338">
    <property type="status" value="NOT_ANNOTATED_CDS"/>
    <property type="molecule type" value="Genomic_DNA"/>
</dbReference>
<dbReference type="CCDS" id="CCDS58388.1"/>
<dbReference type="RefSeq" id="NP_001157876.1">
    <property type="nucleotide sequence ID" value="NM_001164404.2"/>
</dbReference>
<dbReference type="SMR" id="A6NDK9"/>
<dbReference type="BioGRID" id="575950">
    <property type="interactions" value="3"/>
</dbReference>
<dbReference type="FunCoup" id="A6NDK9">
    <property type="interactions" value="16"/>
</dbReference>
<dbReference type="IntAct" id="A6NDK9">
    <property type="interactions" value="2"/>
</dbReference>
<dbReference type="STRING" id="9606.ENSP00000300576"/>
<dbReference type="GlyGen" id="A6NDK9">
    <property type="glycosylation" value="1 site"/>
</dbReference>
<dbReference type="iPTMnet" id="A6NDK9"/>
<dbReference type="PhosphoSitePlus" id="A6NDK9"/>
<dbReference type="BioMuta" id="GOLGA6C"/>
<dbReference type="jPOST" id="A6NDK9"/>
<dbReference type="MassIVE" id="A6NDK9"/>
<dbReference type="PaxDb" id="9606-ENSP00000300576"/>
<dbReference type="PeptideAtlas" id="A6NDK9"/>
<dbReference type="ProteomicsDB" id="914"/>
<dbReference type="DNASU" id="653641"/>
<dbReference type="Ensembl" id="ENST00000300576.6">
    <property type="protein sequence ID" value="ENSP00000300576.5"/>
    <property type="gene ID" value="ENSG00000167195.8"/>
</dbReference>
<dbReference type="GeneID" id="653641"/>
<dbReference type="KEGG" id="hsa:653641"/>
<dbReference type="MANE-Select" id="ENST00000300576.6">
    <property type="protein sequence ID" value="ENSP00000300576.5"/>
    <property type="RefSeq nucleotide sequence ID" value="NM_001164404.2"/>
    <property type="RefSeq protein sequence ID" value="NP_001157876.1"/>
</dbReference>
<dbReference type="UCSC" id="uc002azs.3">
    <property type="organism name" value="human"/>
</dbReference>
<dbReference type="AGR" id="HGNC:32206"/>
<dbReference type="CTD" id="653641"/>
<dbReference type="DisGeNET" id="653641"/>
<dbReference type="GeneCards" id="GOLGA6C"/>
<dbReference type="HGNC" id="HGNC:32206">
    <property type="gene designation" value="GOLGA6C"/>
</dbReference>
<dbReference type="HPA" id="ENSG00000167195">
    <property type="expression patterns" value="Group enriched (liver, testis)"/>
</dbReference>
<dbReference type="neXtProt" id="NX_A6NDK9"/>
<dbReference type="PharmGKB" id="PA162389919"/>
<dbReference type="VEuPathDB" id="HostDB:ENSG00000167195"/>
<dbReference type="eggNOG" id="KOG4725">
    <property type="taxonomic scope" value="Eukaryota"/>
</dbReference>
<dbReference type="GeneTree" id="ENSGT00530000062932"/>
<dbReference type="HOGENOM" id="CLU_012403_1_2_1"/>
<dbReference type="InParanoid" id="A6NDK9"/>
<dbReference type="OMA" id="MMSTHEN"/>
<dbReference type="OrthoDB" id="9538952at2759"/>
<dbReference type="PAN-GO" id="A6NDK9">
    <property type="GO annotations" value="4 GO annotations based on evolutionary models"/>
</dbReference>
<dbReference type="PhylomeDB" id="A6NDK9"/>
<dbReference type="TreeFam" id="TF316990"/>
<dbReference type="PathwayCommons" id="A6NDK9"/>
<dbReference type="SignaLink" id="A6NDK9"/>
<dbReference type="BioGRID-ORCS" id="653641">
    <property type="hits" value="29 hits in 980 CRISPR screens"/>
</dbReference>
<dbReference type="GenomeRNAi" id="653641"/>
<dbReference type="Pharos" id="A6NDK9">
    <property type="development level" value="Tdark"/>
</dbReference>
<dbReference type="PRO" id="PR:A6NDK9"/>
<dbReference type="Proteomes" id="UP000005640">
    <property type="component" value="Chromosome 15"/>
</dbReference>
<dbReference type="RNAct" id="A6NDK9">
    <property type="molecule type" value="protein"/>
</dbReference>
<dbReference type="Bgee" id="ENSG00000167195">
    <property type="expression patterns" value="Expressed in primordial germ cell in gonad and 12 other cell types or tissues"/>
</dbReference>
<dbReference type="GO" id="GO:0005801">
    <property type="term" value="C:cis-Golgi network"/>
    <property type="evidence" value="ECO:0000318"/>
    <property type="project" value="GO_Central"/>
</dbReference>
<dbReference type="GO" id="GO:0000137">
    <property type="term" value="C:Golgi cis cisterna"/>
    <property type="evidence" value="ECO:0000318"/>
    <property type="project" value="GO_Central"/>
</dbReference>
<dbReference type="GO" id="GO:0032580">
    <property type="term" value="C:Golgi cisterna membrane"/>
    <property type="evidence" value="ECO:0000318"/>
    <property type="project" value="GO_Central"/>
</dbReference>
<dbReference type="GO" id="GO:0007030">
    <property type="term" value="P:Golgi organization"/>
    <property type="evidence" value="ECO:0000318"/>
    <property type="project" value="GO_Central"/>
</dbReference>
<dbReference type="InterPro" id="IPR043976">
    <property type="entry name" value="GOLGA_cons_dom"/>
</dbReference>
<dbReference type="InterPro" id="IPR024858">
    <property type="entry name" value="Golgin_A"/>
</dbReference>
<dbReference type="PANTHER" id="PTHR10881:SF44">
    <property type="entry name" value="GOLGIN SUBFAMILY A MEMBER 6A-RELATED"/>
    <property type="match status" value="1"/>
</dbReference>
<dbReference type="PANTHER" id="PTHR10881">
    <property type="entry name" value="GOLGIN SUBFAMILY A MEMBER-RELATED"/>
    <property type="match status" value="1"/>
</dbReference>
<dbReference type="Pfam" id="PF15070">
    <property type="entry name" value="GOLGA2L5"/>
    <property type="match status" value="3"/>
</dbReference>
<name>GOG6C_HUMAN</name>
<sequence>MWPQPYLPPHPMMLEESRQNKLAAAKKKLKEYQQRKSPGIPAGAKTKKKKTDSSPETTTSGGGHSPGDSQYQELAVALESSSVTINQLNENIESLKQQKKQVEHQLEEAKKTNNEIHKAQMEQLETINILTLEKADLKTTLYHTKRAARHFEEESKDLAGRLQYSLQRIQELERALSAVSTQQQEEDRSSSCREAVLQRRLQQTIKERALLNAHVTQVTESLKQVQLERDEYAKHIKGERARWQERMWKMSVEARTLKEEKKRDIHRIQELERSLSELKNQMAEPPSLAPPAVTSVVEQLQDEAKHLRQEVEGLEGKLQSQVENNQALSLLSKEQKQRLQEQEEMLREQEAQRVREQERLCEQNERLREQQKTLQEQGERLRKQEQRLRKQEERLRKEEERLQKQEKRLWDQEERLWKKEERLQKQEERLALSQNHKLDKQLAEPQCSFEDLNNEKKSALQLEQQVKELQEKLDEEHLEAASQRNQQLETQLSLVALPGEGDGGQHLDSEEEEAPRPTPNIPEDLESREATSSFMDLPKEKADGTEQVERRELGFVQPSGVTDGMRESFTVYESQGAVPNTRHQEMEDVIRLAQKEEEMKVKLLELQELVLPLVGNHEGHGKFLIAAQNPADEPTPGAPAPQELGAAGEQDDFYEVSLDNNVEPAPGAAREGSPHDNPPVQQIVQLSPVMQDT</sequence>
<gene>
    <name type="primary">GOLGA6C</name>
</gene>
<keyword id="KW-0175">Coiled coil</keyword>
<keyword id="KW-1267">Proteomics identification</keyword>
<keyword id="KW-1185">Reference proteome</keyword>
<proteinExistence type="evidence at protein level"/>
<reference key="1">
    <citation type="journal article" date="2006" name="Nature">
        <title>Analysis of the DNA sequence and duplication history of human chromosome 15.</title>
        <authorList>
            <person name="Zody M.C."/>
            <person name="Garber M."/>
            <person name="Sharpe T."/>
            <person name="Young S.K."/>
            <person name="Rowen L."/>
            <person name="O'Neill K."/>
            <person name="Whittaker C.A."/>
            <person name="Kamal M."/>
            <person name="Chang J.L."/>
            <person name="Cuomo C.A."/>
            <person name="Dewar K."/>
            <person name="FitzGerald M.G."/>
            <person name="Kodira C.D."/>
            <person name="Madan A."/>
            <person name="Qin S."/>
            <person name="Yang X."/>
            <person name="Abbasi N."/>
            <person name="Abouelleil A."/>
            <person name="Arachchi H.M."/>
            <person name="Baradarani L."/>
            <person name="Birditt B."/>
            <person name="Bloom S."/>
            <person name="Bloom T."/>
            <person name="Borowsky M.L."/>
            <person name="Burke J."/>
            <person name="Butler J."/>
            <person name="Cook A."/>
            <person name="DeArellano K."/>
            <person name="DeCaprio D."/>
            <person name="Dorris L. III"/>
            <person name="Dors M."/>
            <person name="Eichler E.E."/>
            <person name="Engels R."/>
            <person name="Fahey J."/>
            <person name="Fleetwood P."/>
            <person name="Friedman C."/>
            <person name="Gearin G."/>
            <person name="Hall J.L."/>
            <person name="Hensley G."/>
            <person name="Johnson E."/>
            <person name="Jones C."/>
            <person name="Kamat A."/>
            <person name="Kaur A."/>
            <person name="Locke D.P."/>
            <person name="Madan A."/>
            <person name="Munson G."/>
            <person name="Jaffe D.B."/>
            <person name="Lui A."/>
            <person name="Macdonald P."/>
            <person name="Mauceli E."/>
            <person name="Naylor J.W."/>
            <person name="Nesbitt R."/>
            <person name="Nicol R."/>
            <person name="O'Leary S.B."/>
            <person name="Ratcliffe A."/>
            <person name="Rounsley S."/>
            <person name="She X."/>
            <person name="Sneddon K.M.B."/>
            <person name="Stewart S."/>
            <person name="Sougnez C."/>
            <person name="Stone S.M."/>
            <person name="Topham K."/>
            <person name="Vincent D."/>
            <person name="Wang S."/>
            <person name="Zimmer A.R."/>
            <person name="Birren B.W."/>
            <person name="Hood L."/>
            <person name="Lander E.S."/>
            <person name="Nusbaum C."/>
        </authorList>
    </citation>
    <scope>NUCLEOTIDE SEQUENCE [LARGE SCALE GENOMIC DNA]</scope>
</reference>
<protein>
    <recommendedName>
        <fullName>Golgin subfamily A member 6C</fullName>
    </recommendedName>
</protein>
<accession>A6NDK9</accession>
<organism>
    <name type="scientific">Homo sapiens</name>
    <name type="common">Human</name>
    <dbReference type="NCBI Taxonomy" id="9606"/>
    <lineage>
        <taxon>Eukaryota</taxon>
        <taxon>Metazoa</taxon>
        <taxon>Chordata</taxon>
        <taxon>Craniata</taxon>
        <taxon>Vertebrata</taxon>
        <taxon>Euteleostomi</taxon>
        <taxon>Mammalia</taxon>
        <taxon>Eutheria</taxon>
        <taxon>Euarchontoglires</taxon>
        <taxon>Primates</taxon>
        <taxon>Haplorrhini</taxon>
        <taxon>Catarrhini</taxon>
        <taxon>Hominidae</taxon>
        <taxon>Homo</taxon>
    </lineage>
</organism>
<evidence type="ECO:0000255" key="1"/>
<evidence type="ECO:0000256" key="2">
    <source>
        <dbReference type="SAM" id="MobiDB-lite"/>
    </source>
</evidence>
<evidence type="ECO:0000305" key="3"/>